<reference key="1">
    <citation type="journal article" date="1993" name="Genetics">
        <title>Genetic and molecular characterization of GAL83: its interaction and similarities with other genes involved in glucose repression in Saccharomyces cerevisiae.</title>
        <authorList>
            <person name="Erickson J.R."/>
            <person name="Johnston M."/>
        </authorList>
    </citation>
    <scope>NUCLEOTIDE SEQUENCE [GENOMIC DNA]</scope>
    <source>
        <strain>ATCC 204511 / S288c / AB972</strain>
    </source>
</reference>
<reference key="2">
    <citation type="submission" date="1993-03" db="EMBL/GenBank/DDBJ databases">
        <title>Dominant, pleiotropic gain-of-function suppressors of temperature-sensitive alleles of the Saccharomyces cerevisiae RPO21 gene.</title>
        <authorList>
            <person name="Drebot M.A."/>
            <person name="Jansma D."/>
            <person name="Himmelfarb H.J."/>
            <person name="Friesen J.D."/>
        </authorList>
    </citation>
    <scope>NUCLEOTIDE SEQUENCE [GENOMIC DNA]</scope>
</reference>
<reference key="3">
    <citation type="journal article" date="1997" name="Nature">
        <title>The nucleotide sequence of Saccharomyces cerevisiae chromosome V.</title>
        <authorList>
            <person name="Dietrich F.S."/>
            <person name="Mulligan J.T."/>
            <person name="Hennessy K.M."/>
            <person name="Yelton M.A."/>
            <person name="Allen E."/>
            <person name="Araujo R."/>
            <person name="Aviles E."/>
            <person name="Berno A."/>
            <person name="Brennan T."/>
            <person name="Carpenter J."/>
            <person name="Chen E."/>
            <person name="Cherry J.M."/>
            <person name="Chung E."/>
            <person name="Duncan M."/>
            <person name="Guzman E."/>
            <person name="Hartzell G."/>
            <person name="Hunicke-Smith S."/>
            <person name="Hyman R.W."/>
            <person name="Kayser A."/>
            <person name="Komp C."/>
            <person name="Lashkari D."/>
            <person name="Lew H."/>
            <person name="Lin D."/>
            <person name="Mosedale D."/>
            <person name="Nakahara K."/>
            <person name="Namath A."/>
            <person name="Norgren R."/>
            <person name="Oefner P."/>
            <person name="Oh C."/>
            <person name="Petel F.X."/>
            <person name="Roberts D."/>
            <person name="Sehl P."/>
            <person name="Schramm S."/>
            <person name="Shogren T."/>
            <person name="Smith V."/>
            <person name="Taylor P."/>
            <person name="Wei Y."/>
            <person name="Botstein D."/>
            <person name="Davis R.W."/>
        </authorList>
    </citation>
    <scope>NUCLEOTIDE SEQUENCE [LARGE SCALE GENOMIC DNA]</scope>
    <source>
        <strain>ATCC 204508 / S288c</strain>
    </source>
</reference>
<reference key="4">
    <citation type="journal article" date="2014" name="G3 (Bethesda)">
        <title>The reference genome sequence of Saccharomyces cerevisiae: Then and now.</title>
        <authorList>
            <person name="Engel S.R."/>
            <person name="Dietrich F.S."/>
            <person name="Fisk D.G."/>
            <person name="Binkley G."/>
            <person name="Balakrishnan R."/>
            <person name="Costanzo M.C."/>
            <person name="Dwight S.S."/>
            <person name="Hitz B.C."/>
            <person name="Karra K."/>
            <person name="Nash R.S."/>
            <person name="Weng S."/>
            <person name="Wong E.D."/>
            <person name="Lloyd P."/>
            <person name="Skrzypek M.S."/>
            <person name="Miyasato S.R."/>
            <person name="Simison M."/>
            <person name="Cherry J.M."/>
        </authorList>
    </citation>
    <scope>GENOME REANNOTATION</scope>
    <source>
        <strain>ATCC 204508 / S288c</strain>
    </source>
</reference>
<reference key="5">
    <citation type="journal article" date="2007" name="Genome Res.">
        <title>Approaching a complete repository of sequence-verified protein-encoding clones for Saccharomyces cerevisiae.</title>
        <authorList>
            <person name="Hu Y."/>
            <person name="Rolfs A."/>
            <person name="Bhullar B."/>
            <person name="Murthy T.V.S."/>
            <person name="Zhu C."/>
            <person name="Berger M.F."/>
            <person name="Camargo A.A."/>
            <person name="Kelley F."/>
            <person name="McCarron S."/>
            <person name="Jepson D."/>
            <person name="Richardson A."/>
            <person name="Raphael J."/>
            <person name="Moreira D."/>
            <person name="Taycher E."/>
            <person name="Zuo D."/>
            <person name="Mohr S."/>
            <person name="Kane M.F."/>
            <person name="Williamson J."/>
            <person name="Simpson A.J.G."/>
            <person name="Bulyk M.L."/>
            <person name="Harlow E."/>
            <person name="Marsischky G."/>
            <person name="Kolodner R.D."/>
            <person name="LaBaer J."/>
        </authorList>
    </citation>
    <scope>NUCLEOTIDE SEQUENCE [GENOMIC DNA]</scope>
    <source>
        <strain>ATCC 204508 / S288c</strain>
    </source>
</reference>
<reference key="6">
    <citation type="journal article" date="1994" name="EMBO J.">
        <title>A family of proteins containing a conserved domain that mediates interaction with the yeast SNF1 protein kinase complex.</title>
        <authorList>
            <person name="Yang X."/>
            <person name="Jiang R."/>
            <person name="Carlson M."/>
        </authorList>
    </citation>
    <scope>INTERACTION WITH SNF1</scope>
    <scope>PHOSPHORYLATION</scope>
</reference>
<reference key="7">
    <citation type="journal article" date="1997" name="Mol. Cell. Biol.">
        <title>The Snf1 protein kinase and its activating subunit, Snf4, interact with distinct domains of the Sip1/Sip2/Gal83 component in the kinase complex.</title>
        <authorList>
            <person name="Jiang R."/>
            <person name="Carlson M."/>
        </authorList>
    </citation>
    <scope>INTERACTION WITH SNF1 AND SNF4</scope>
</reference>
<reference key="8">
    <citation type="journal article" date="2000" name="EMBO J.">
        <title>beta-subunits of Snf1 kinase are required for kinase function and substrate definition.</title>
        <authorList>
            <person name="Schmidt M.C."/>
            <person name="McCartney R.R."/>
        </authorList>
    </citation>
    <scope>FUNCTION</scope>
</reference>
<reference key="9">
    <citation type="journal article" date="2001" name="Genes Dev.">
        <title>Subcellular localization of the Snf1 kinase is regulated by specific beta subunits and a novel glucose signaling mechanism.</title>
        <authorList>
            <person name="Vincent O."/>
            <person name="Townley R."/>
            <person name="Kuchin S."/>
            <person name="Carlson M."/>
        </authorList>
    </citation>
    <scope>SUBCELLULAR LOCATION</scope>
</reference>
<reference key="10">
    <citation type="journal article" date="2002" name="J. Biol. Chem.">
        <title>Purification and characterization of Snf1 kinase complexes containing a defined beta subunit composition.</title>
        <authorList>
            <person name="Nath N."/>
            <person name="McCartney R.R."/>
            <person name="Schmidt M.C."/>
        </authorList>
    </citation>
    <scope>IDENTIFICATION IN SNF1 KINASE COMPLEX</scope>
</reference>
<reference key="11">
    <citation type="journal article" date="2003" name="Nature">
        <title>Global analysis of protein localization in budding yeast.</title>
        <authorList>
            <person name="Huh W.-K."/>
            <person name="Falvo J.V."/>
            <person name="Gerke L.C."/>
            <person name="Carroll A.S."/>
            <person name="Howson R.W."/>
            <person name="Weissman J.S."/>
            <person name="O'Shea E.K."/>
        </authorList>
    </citation>
    <scope>SUBCELLULAR LOCATION [LARGE SCALE ANALYSIS]</scope>
</reference>
<reference key="12">
    <citation type="journal article" date="2003" name="Nature">
        <title>Global analysis of protein expression in yeast.</title>
        <authorList>
            <person name="Ghaemmaghami S."/>
            <person name="Huh W.-K."/>
            <person name="Bower K."/>
            <person name="Howson R.W."/>
            <person name="Belle A."/>
            <person name="Dephoure N."/>
            <person name="O'Shea E.K."/>
            <person name="Weissman J.S."/>
        </authorList>
    </citation>
    <scope>LEVEL OF PROTEIN EXPRESSION [LARGE SCALE ANALYSIS]</scope>
</reference>
<reference key="13">
    <citation type="journal article" date="2007" name="Proc. Natl. Acad. Sci. U.S.A.">
        <title>Analysis of phosphorylation sites on proteins from Saccharomyces cerevisiae by electron transfer dissociation (ETD) mass spectrometry.</title>
        <authorList>
            <person name="Chi A."/>
            <person name="Huttenhower C."/>
            <person name="Geer L.Y."/>
            <person name="Coon J.J."/>
            <person name="Syka J.E.P."/>
            <person name="Bai D.L."/>
            <person name="Shabanowitz J."/>
            <person name="Burke D.J."/>
            <person name="Troyanskaya O.G."/>
            <person name="Hunt D.F."/>
        </authorList>
    </citation>
    <scope>PHOSPHORYLATION [LARGE SCALE ANALYSIS] AT SER-276 AND SER-279</scope>
    <scope>IDENTIFICATION BY MASS SPECTROMETRY [LARGE SCALE ANALYSIS]</scope>
</reference>
<reference key="14">
    <citation type="journal article" date="2008" name="Biochem. Biophys. Res. Commun.">
        <title>Novel Ree1 regulates the expression of ENO1 via the Snf1 complex pathway in Saccharomyces cerevisiae.</title>
        <authorList>
            <person name="Choi I.D."/>
            <person name="Jeong M.Y."/>
            <person name="Ham M.S."/>
            <person name="Sung H.C."/>
            <person name="Yun C.W."/>
        </authorList>
    </citation>
    <scope>INTERACTION WITH REE1</scope>
</reference>
<reference key="15">
    <citation type="journal article" date="2008" name="Mol. Cell. Proteomics">
        <title>A multidimensional chromatography technology for in-depth phosphoproteome analysis.</title>
        <authorList>
            <person name="Albuquerque C.P."/>
            <person name="Smolka M.B."/>
            <person name="Payne S.H."/>
            <person name="Bafna V."/>
            <person name="Eng J."/>
            <person name="Zhou H."/>
        </authorList>
    </citation>
    <scope>PHOSPHORYLATION [LARGE SCALE ANALYSIS] AT SER-12 AND SER-44</scope>
    <scope>IDENTIFICATION BY MASS SPECTROMETRY [LARGE SCALE ANALYSIS]</scope>
</reference>
<reference key="16">
    <citation type="journal article" date="2009" name="Science">
        <title>Global analysis of Cdk1 substrate phosphorylation sites provides insights into evolution.</title>
        <authorList>
            <person name="Holt L.J."/>
            <person name="Tuch B.B."/>
            <person name="Villen J."/>
            <person name="Johnson A.D."/>
            <person name="Gygi S.P."/>
            <person name="Morgan D.O."/>
        </authorList>
    </citation>
    <scope>PHOSPHORYLATION [LARGE SCALE ANALYSIS] AT SER-12; SER-21 AND SER-135</scope>
    <scope>IDENTIFICATION BY MASS SPECTROMETRY [LARGE SCALE ANALYSIS]</scope>
</reference>
<feature type="chain" id="PRO_0000204373" description="SNF1 protein kinase subunit beta-3">
    <location>
        <begin position="1"/>
        <end position="417"/>
    </location>
</feature>
<feature type="region of interest" description="Disordered" evidence="1">
    <location>
        <begin position="1"/>
        <end position="37"/>
    </location>
</feature>
<feature type="region of interest" description="Disordered" evidence="1">
    <location>
        <begin position="64"/>
        <end position="155"/>
    </location>
</feature>
<feature type="region of interest" description="Kinase-interacting sequence (KIS); required for interaction with SNF1">
    <location>
        <begin position="152"/>
        <end position="342"/>
    </location>
</feature>
<feature type="region of interest" description="Disordered" evidence="1">
    <location>
        <begin position="250"/>
        <end position="269"/>
    </location>
</feature>
<feature type="region of interest" description="Association with SNF1 kinase complex (ASC) domain; required for interaction with SNF4" evidence="8">
    <location>
        <begin position="343"/>
        <end position="417"/>
    </location>
</feature>
<feature type="compositionally biased region" description="Basic and acidic residues" evidence="1">
    <location>
        <begin position="1"/>
        <end position="12"/>
    </location>
</feature>
<feature type="compositionally biased region" description="Polar residues" evidence="1">
    <location>
        <begin position="19"/>
        <end position="37"/>
    </location>
</feature>
<feature type="compositionally biased region" description="Polar residues" evidence="1">
    <location>
        <begin position="118"/>
        <end position="136"/>
    </location>
</feature>
<feature type="compositionally biased region" description="Low complexity" evidence="1">
    <location>
        <begin position="137"/>
        <end position="149"/>
    </location>
</feature>
<feature type="compositionally biased region" description="Basic and acidic residues" evidence="1">
    <location>
        <begin position="257"/>
        <end position="269"/>
    </location>
</feature>
<feature type="modified residue" description="Phosphoserine" evidence="11 12">
    <location>
        <position position="12"/>
    </location>
</feature>
<feature type="modified residue" description="Phosphoserine" evidence="12">
    <location>
        <position position="21"/>
    </location>
</feature>
<feature type="modified residue" description="Phosphoserine" evidence="11">
    <location>
        <position position="44"/>
    </location>
</feature>
<feature type="modified residue" description="Phosphoserine" evidence="12">
    <location>
        <position position="135"/>
    </location>
</feature>
<feature type="modified residue" description="Phosphoserine" evidence="10">
    <location>
        <position position="276"/>
    </location>
</feature>
<feature type="modified residue" description="Phosphoserine" evidence="10">
    <location>
        <position position="279"/>
    </location>
</feature>
<name>GAL83_YEAST</name>
<protein>
    <recommendedName>
        <fullName>SNF1 protein kinase subunit beta-3</fullName>
    </recommendedName>
    <alternativeName>
        <fullName>Glucose repression protein GAL83</fullName>
    </alternativeName>
    <alternativeName>
        <fullName>Protein SPM1</fullName>
    </alternativeName>
</protein>
<keyword id="KW-0963">Cytoplasm</keyword>
<keyword id="KW-0539">Nucleus</keyword>
<keyword id="KW-0597">Phosphoprotein</keyword>
<keyword id="KW-1185">Reference proteome</keyword>
<comment type="function">
    <text evidence="2">Beta subunit of the SNF1 kinase complex, which is required for transcriptional, metabolic, and developmental adaptations in response to glucose limitation. Has a structural role, mediating heterotrimer formation, and a regulatory role, defining carbon source-regulated subcellular location and substrate specificity of the SNF1 kinase complex. Promotes the relocalization of the SNF1 kinase complex to the nucleus upon shift to nonfermentable carbon sources.</text>
</comment>
<comment type="subunit">
    <text evidence="4 6 7 8">Component of the SNF1 kinase complex, a heterotrimeric complex composed of the catalytic alpha subunit SNF1, one of the three related beta subunits SIP1, SIP2 or GAL83, and the regulatory gamma subunit SNF4. The beta subunit serves as a bridge between the catalytic and the regulatory subunit. Interacts (via KIS domain) with SNF1. Interacts (via ASC domain) with SNF4. Interacts with REE1.</text>
</comment>
<comment type="interaction">
    <interactant intactId="EBI-7244">
        <id>Q04739</id>
    </interactant>
    <interactant intactId="EBI-17516">
        <id>P06782</id>
        <label>SNF1</label>
    </interactant>
    <organismsDiffer>false</organismsDiffer>
    <experiments>6</experiments>
</comment>
<comment type="interaction">
    <interactant intactId="EBI-7244">
        <id>Q04739</id>
    </interactant>
    <interactant intactId="EBI-17537">
        <id>P12904</id>
        <label>SNF4</label>
    </interactant>
    <organismsDiffer>false</organismsDiffer>
    <experiments>3</experiments>
</comment>
<comment type="subcellular location">
    <subcellularLocation>
        <location evidence="3">Cytoplasm</location>
    </subcellularLocation>
    <subcellularLocation>
        <location evidence="3">Nucleus</location>
    </subcellularLocation>
    <text evidence="3">Resides in the cytosol during growth on fermentable carbon sources and relocalizes rapidly to the nucleus in response to carbon stress.</text>
</comment>
<comment type="PTM">
    <text evidence="7">Phosphorylated by SNF1 in vitro.</text>
</comment>
<comment type="miscellaneous">
    <text evidence="5">Present with 3590 molecules/cell in log phase SD medium.</text>
</comment>
<comment type="similarity">
    <text evidence="9">Belongs to the 5'-AMP-activated protein kinase beta subunit family.</text>
</comment>
<proteinExistence type="evidence at protein level"/>
<gene>
    <name type="primary">GAL83</name>
    <name type="synonym">SPM1</name>
    <name type="ordered locus">YER027C</name>
</gene>
<organism>
    <name type="scientific">Saccharomyces cerevisiae (strain ATCC 204508 / S288c)</name>
    <name type="common">Baker's yeast</name>
    <dbReference type="NCBI Taxonomy" id="559292"/>
    <lineage>
        <taxon>Eukaryota</taxon>
        <taxon>Fungi</taxon>
        <taxon>Dikarya</taxon>
        <taxon>Ascomycota</taxon>
        <taxon>Saccharomycotina</taxon>
        <taxon>Saccharomycetes</taxon>
        <taxon>Saccharomycetales</taxon>
        <taxon>Saccharomycetaceae</taxon>
        <taxon>Saccharomyces</taxon>
    </lineage>
</organism>
<accession>Q04739</accession>
<accession>D3DLS6</accession>
<evidence type="ECO:0000256" key="1">
    <source>
        <dbReference type="SAM" id="MobiDB-lite"/>
    </source>
</evidence>
<evidence type="ECO:0000269" key="2">
    <source>
    </source>
</evidence>
<evidence type="ECO:0000269" key="3">
    <source>
    </source>
</evidence>
<evidence type="ECO:0000269" key="4">
    <source>
    </source>
</evidence>
<evidence type="ECO:0000269" key="5">
    <source>
    </source>
</evidence>
<evidence type="ECO:0000269" key="6">
    <source>
    </source>
</evidence>
<evidence type="ECO:0000269" key="7">
    <source>
    </source>
</evidence>
<evidence type="ECO:0000269" key="8">
    <source>
    </source>
</evidence>
<evidence type="ECO:0000305" key="9"/>
<evidence type="ECO:0007744" key="10">
    <source>
    </source>
</evidence>
<evidence type="ECO:0007744" key="11">
    <source>
    </source>
</evidence>
<evidence type="ECO:0007744" key="12">
    <source>
    </source>
</evidence>
<sequence>MAGDNPENKDASMLDVSDAASNTTINGKHSADSTNEASLAYTFSQMNVDNPNELEPQHPLRHKSSLIFNDDDDDEIPPYSNHAENGSGETFDSDDDIDASSSSSIDSNEGDIHDADMTGNTLQKMDYQPSQQPDSLQNQGFQQQQEQQQGTVEGKKGRAMMFPVDITWQQGGNKVYVTGSFTGWRKMIGLVPVPGQPGLMHVKLQLPPGTHRFRFIVDNELRFSDYLPTATDQMGNFVNYMEVSAPPDWGNEPQQHLAEKKANHVDDSKLSKRPMSARSRIALEIEKEPDDMGDGYTRFHDETPAKPNLEYTQDIPAVFTDPNVMEQYYLTLDQQQNNHQNMAWLTPPQLPPHLENVILNSYSNAQTDNTSGALPIPNHVILNHLATSSIKHNTLCVASIVRYKQKYVTQILYTPLQ</sequence>
<dbReference type="EMBL" id="X72893">
    <property type="protein sequence ID" value="CAA51411.1"/>
    <property type="molecule type" value="Genomic_DNA"/>
</dbReference>
<dbReference type="EMBL" id="L13599">
    <property type="status" value="NOT_ANNOTATED_CDS"/>
    <property type="molecule type" value="Genomic_DNA"/>
</dbReference>
<dbReference type="EMBL" id="Z14127">
    <property type="protein sequence ID" value="CAA78501.1"/>
    <property type="molecule type" value="Genomic_DNA"/>
</dbReference>
<dbReference type="EMBL" id="U18778">
    <property type="protein sequence ID" value="AAB64560.1"/>
    <property type="molecule type" value="Genomic_DNA"/>
</dbReference>
<dbReference type="EMBL" id="AY692771">
    <property type="protein sequence ID" value="AAT92790.1"/>
    <property type="molecule type" value="Genomic_DNA"/>
</dbReference>
<dbReference type="EMBL" id="BK006939">
    <property type="protein sequence ID" value="DAA07680.1"/>
    <property type="molecule type" value="Genomic_DNA"/>
</dbReference>
<dbReference type="PIR" id="S52591">
    <property type="entry name" value="S52591"/>
</dbReference>
<dbReference type="RefSeq" id="NP_010944.1">
    <property type="nucleotide sequence ID" value="NM_001178918.1"/>
</dbReference>
<dbReference type="SMR" id="Q04739"/>
<dbReference type="BioGRID" id="36762">
    <property type="interactions" value="89"/>
</dbReference>
<dbReference type="ComplexPortal" id="CPX-231">
    <property type="entry name" value="Snf1 protein kinase complex variant GAL83"/>
</dbReference>
<dbReference type="DIP" id="DIP-1298N"/>
<dbReference type="FunCoup" id="Q04739">
    <property type="interactions" value="535"/>
</dbReference>
<dbReference type="IntAct" id="Q04739">
    <property type="interactions" value="16"/>
</dbReference>
<dbReference type="MINT" id="Q04739"/>
<dbReference type="STRING" id="4932.YER027C"/>
<dbReference type="CAZy" id="CBM48">
    <property type="family name" value="Carbohydrate-Binding Module Family 48"/>
</dbReference>
<dbReference type="iPTMnet" id="Q04739"/>
<dbReference type="PaxDb" id="4932-YER027C"/>
<dbReference type="PeptideAtlas" id="Q04739"/>
<dbReference type="EnsemblFungi" id="YER027C_mRNA">
    <property type="protein sequence ID" value="YER027C"/>
    <property type="gene ID" value="YER027C"/>
</dbReference>
<dbReference type="GeneID" id="856749"/>
<dbReference type="KEGG" id="sce:YER027C"/>
<dbReference type="AGR" id="SGD:S000000829"/>
<dbReference type="SGD" id="S000000829">
    <property type="gene designation" value="GAL83"/>
</dbReference>
<dbReference type="VEuPathDB" id="FungiDB:YER027C"/>
<dbReference type="eggNOG" id="KOG1616">
    <property type="taxonomic scope" value="Eukaryota"/>
</dbReference>
<dbReference type="GeneTree" id="ENSGT00940000176367"/>
<dbReference type="HOGENOM" id="CLU_033562_1_0_1"/>
<dbReference type="InParanoid" id="Q04739"/>
<dbReference type="OMA" id="MEQYYVA"/>
<dbReference type="OrthoDB" id="531008at2759"/>
<dbReference type="BioCyc" id="YEAST:G3O-30208-MONOMER"/>
<dbReference type="BRENDA" id="2.7.11.31">
    <property type="organism ID" value="984"/>
</dbReference>
<dbReference type="Reactome" id="R-SCE-1632852">
    <property type="pathway name" value="Macroautophagy"/>
</dbReference>
<dbReference type="Reactome" id="R-SCE-163680">
    <property type="pathway name" value="AMPK inhibits chREBP transcriptional activation activity"/>
</dbReference>
<dbReference type="Reactome" id="R-SCE-200425">
    <property type="pathway name" value="Carnitine shuttle"/>
</dbReference>
<dbReference type="Reactome" id="R-SCE-380972">
    <property type="pathway name" value="Energy dependent regulation of mTOR by LKB1-AMPK"/>
</dbReference>
<dbReference type="BioGRID-ORCS" id="856749">
    <property type="hits" value="1 hit in 10 CRISPR screens"/>
</dbReference>
<dbReference type="PRO" id="PR:Q04739"/>
<dbReference type="Proteomes" id="UP000002311">
    <property type="component" value="Chromosome V"/>
</dbReference>
<dbReference type="RNAct" id="Q04739">
    <property type="molecule type" value="protein"/>
</dbReference>
<dbReference type="GO" id="GO:0005737">
    <property type="term" value="C:cytoplasm"/>
    <property type="evidence" value="ECO:0000314"/>
    <property type="project" value="SGD"/>
</dbReference>
<dbReference type="GO" id="GO:0005641">
    <property type="term" value="C:nuclear envelope lumen"/>
    <property type="evidence" value="ECO:0000314"/>
    <property type="project" value="SGD"/>
</dbReference>
<dbReference type="GO" id="GO:0031588">
    <property type="term" value="C:nucleotide-activated protein kinase complex"/>
    <property type="evidence" value="ECO:0000314"/>
    <property type="project" value="SGD"/>
</dbReference>
<dbReference type="GO" id="GO:0005634">
    <property type="term" value="C:nucleus"/>
    <property type="evidence" value="ECO:0000314"/>
    <property type="project" value="SGD"/>
</dbReference>
<dbReference type="GO" id="GO:0140767">
    <property type="term" value="F:enzyme-substrate adaptor activity"/>
    <property type="evidence" value="ECO:0000316"/>
    <property type="project" value="GO_Central"/>
</dbReference>
<dbReference type="GO" id="GO:0019901">
    <property type="term" value="F:protein kinase binding"/>
    <property type="evidence" value="ECO:0000318"/>
    <property type="project" value="GO_Central"/>
</dbReference>
<dbReference type="GO" id="GO:0007155">
    <property type="term" value="P:cell adhesion"/>
    <property type="evidence" value="ECO:0000315"/>
    <property type="project" value="SGD"/>
</dbReference>
<dbReference type="GO" id="GO:0030447">
    <property type="term" value="P:filamentous growth"/>
    <property type="evidence" value="ECO:0000315"/>
    <property type="project" value="ComplexPortal"/>
</dbReference>
<dbReference type="GO" id="GO:0001403">
    <property type="term" value="P:invasive growth in response to glucose limitation"/>
    <property type="evidence" value="ECO:0000315"/>
    <property type="project" value="SGD"/>
</dbReference>
<dbReference type="GO" id="GO:1904547">
    <property type="term" value="P:regulation of cellular response to glucose starvation"/>
    <property type="evidence" value="ECO:0000250"/>
    <property type="project" value="ComplexPortal"/>
</dbReference>
<dbReference type="GO" id="GO:2000217">
    <property type="term" value="P:regulation of invasive growth in response to glucose limitation"/>
    <property type="evidence" value="ECO:0000315"/>
    <property type="project" value="ComplexPortal"/>
</dbReference>
<dbReference type="GO" id="GO:0043254">
    <property type="term" value="P:regulation of protein-containing complex assembly"/>
    <property type="evidence" value="ECO:0000316"/>
    <property type="project" value="SGD"/>
</dbReference>
<dbReference type="GO" id="GO:0007165">
    <property type="term" value="P:signal transduction"/>
    <property type="evidence" value="ECO:0000316"/>
    <property type="project" value="SGD"/>
</dbReference>
<dbReference type="CDD" id="cd02859">
    <property type="entry name" value="E_set_AMPKbeta_like_N"/>
    <property type="match status" value="1"/>
</dbReference>
<dbReference type="FunFam" id="2.60.40.10:FF:000562">
    <property type="entry name" value="Snf1 kinase complex beta-subunit Gal83"/>
    <property type="match status" value="1"/>
</dbReference>
<dbReference type="Gene3D" id="6.20.250.60">
    <property type="match status" value="1"/>
</dbReference>
<dbReference type="Gene3D" id="2.60.40.10">
    <property type="entry name" value="Immunoglobulins"/>
    <property type="match status" value="1"/>
</dbReference>
<dbReference type="InterPro" id="IPR032640">
    <property type="entry name" value="AMPK1_CBM"/>
</dbReference>
<dbReference type="InterPro" id="IPR006828">
    <property type="entry name" value="ASC_dom"/>
</dbReference>
<dbReference type="InterPro" id="IPR037256">
    <property type="entry name" value="ASC_dom_sf"/>
</dbReference>
<dbReference type="InterPro" id="IPR050827">
    <property type="entry name" value="CRP1_MDG1_kinase"/>
</dbReference>
<dbReference type="InterPro" id="IPR013783">
    <property type="entry name" value="Ig-like_fold"/>
</dbReference>
<dbReference type="InterPro" id="IPR014756">
    <property type="entry name" value="Ig_E-set"/>
</dbReference>
<dbReference type="PANTHER" id="PTHR10343">
    <property type="entry name" value="5'-AMP-ACTIVATED PROTEIN KINASE , BETA SUBUNIT"/>
    <property type="match status" value="1"/>
</dbReference>
<dbReference type="PANTHER" id="PTHR10343:SF84">
    <property type="entry name" value="5'-AMP-ACTIVATED PROTEIN KINASE SUBUNIT BETA-1"/>
    <property type="match status" value="1"/>
</dbReference>
<dbReference type="Pfam" id="PF16561">
    <property type="entry name" value="AMPK1_CBM"/>
    <property type="match status" value="1"/>
</dbReference>
<dbReference type="Pfam" id="PF04739">
    <property type="entry name" value="AMPKBI"/>
    <property type="match status" value="1"/>
</dbReference>
<dbReference type="SMART" id="SM01010">
    <property type="entry name" value="AMPKBI"/>
    <property type="match status" value="1"/>
</dbReference>
<dbReference type="SUPFAM" id="SSF160219">
    <property type="entry name" value="AMPKBI-like"/>
    <property type="match status" value="1"/>
</dbReference>
<dbReference type="SUPFAM" id="SSF81296">
    <property type="entry name" value="E set domains"/>
    <property type="match status" value="1"/>
</dbReference>